<accession>B4RNP4</accession>
<name>RL33_NEIG2</name>
<keyword id="KW-0687">Ribonucleoprotein</keyword>
<keyword id="KW-0689">Ribosomal protein</keyword>
<dbReference type="EMBL" id="CP001050">
    <property type="protein sequence ID" value="ACF30677.1"/>
    <property type="molecule type" value="Genomic_DNA"/>
</dbReference>
<dbReference type="RefSeq" id="WP_003689824.1">
    <property type="nucleotide sequence ID" value="NC_011035.1"/>
</dbReference>
<dbReference type="SMR" id="B4RNP4"/>
<dbReference type="GeneID" id="66753961"/>
<dbReference type="KEGG" id="ngk:NGK_2068"/>
<dbReference type="HOGENOM" id="CLU_190949_1_1_4"/>
<dbReference type="Proteomes" id="UP000002564">
    <property type="component" value="Chromosome"/>
</dbReference>
<dbReference type="GO" id="GO:0022625">
    <property type="term" value="C:cytosolic large ribosomal subunit"/>
    <property type="evidence" value="ECO:0007669"/>
    <property type="project" value="TreeGrafter"/>
</dbReference>
<dbReference type="GO" id="GO:0003735">
    <property type="term" value="F:structural constituent of ribosome"/>
    <property type="evidence" value="ECO:0007669"/>
    <property type="project" value="InterPro"/>
</dbReference>
<dbReference type="GO" id="GO:0006412">
    <property type="term" value="P:translation"/>
    <property type="evidence" value="ECO:0007669"/>
    <property type="project" value="UniProtKB-UniRule"/>
</dbReference>
<dbReference type="FunFam" id="2.20.28.120:FF:000001">
    <property type="entry name" value="50S ribosomal protein L33"/>
    <property type="match status" value="1"/>
</dbReference>
<dbReference type="Gene3D" id="2.20.28.120">
    <property type="entry name" value="Ribosomal protein L33"/>
    <property type="match status" value="1"/>
</dbReference>
<dbReference type="HAMAP" id="MF_00294">
    <property type="entry name" value="Ribosomal_bL33"/>
    <property type="match status" value="1"/>
</dbReference>
<dbReference type="InterPro" id="IPR001705">
    <property type="entry name" value="Ribosomal_bL33"/>
</dbReference>
<dbReference type="InterPro" id="IPR018264">
    <property type="entry name" value="Ribosomal_bL33_CS"/>
</dbReference>
<dbReference type="InterPro" id="IPR038584">
    <property type="entry name" value="Ribosomal_bL33_sf"/>
</dbReference>
<dbReference type="InterPro" id="IPR011332">
    <property type="entry name" value="Ribosomal_zn-bd"/>
</dbReference>
<dbReference type="NCBIfam" id="NF001860">
    <property type="entry name" value="PRK00595.1"/>
    <property type="match status" value="1"/>
</dbReference>
<dbReference type="NCBIfam" id="TIGR01023">
    <property type="entry name" value="rpmG_bact"/>
    <property type="match status" value="1"/>
</dbReference>
<dbReference type="PANTHER" id="PTHR15238">
    <property type="entry name" value="54S RIBOSOMAL PROTEIN L39, MITOCHONDRIAL"/>
    <property type="match status" value="1"/>
</dbReference>
<dbReference type="PANTHER" id="PTHR15238:SF1">
    <property type="entry name" value="LARGE RIBOSOMAL SUBUNIT PROTEIN BL33M"/>
    <property type="match status" value="1"/>
</dbReference>
<dbReference type="Pfam" id="PF00471">
    <property type="entry name" value="Ribosomal_L33"/>
    <property type="match status" value="1"/>
</dbReference>
<dbReference type="SUPFAM" id="SSF57829">
    <property type="entry name" value="Zn-binding ribosomal proteins"/>
    <property type="match status" value="1"/>
</dbReference>
<dbReference type="PROSITE" id="PS00582">
    <property type="entry name" value="RIBOSOMAL_L33"/>
    <property type="match status" value="1"/>
</dbReference>
<reference key="1">
    <citation type="journal article" date="2008" name="J. Bacteriol.">
        <title>Complete genome sequence of Neisseria gonorrhoeae NCCP11945.</title>
        <authorList>
            <person name="Chung G.T."/>
            <person name="Yoo J.S."/>
            <person name="Oh H.B."/>
            <person name="Lee Y.S."/>
            <person name="Cha S.H."/>
            <person name="Kim S.J."/>
            <person name="Yoo C.K."/>
        </authorList>
    </citation>
    <scope>NUCLEOTIDE SEQUENCE [LARGE SCALE GENOMIC DNA]</scope>
    <source>
        <strain>NCCP11945</strain>
    </source>
</reference>
<protein>
    <recommendedName>
        <fullName evidence="1">Large ribosomal subunit protein bL33</fullName>
    </recommendedName>
    <alternativeName>
        <fullName evidence="3">50S ribosomal protein L33</fullName>
    </alternativeName>
</protein>
<sequence>MRDKIKLESGAGTGHFYTTTKNKRTMPGKLEIKKFDPVARKHVVYKETKLK</sequence>
<gene>
    <name evidence="1" type="primary">rpmG</name>
    <name type="ordered locus">NGK_2068</name>
</gene>
<evidence type="ECO:0000255" key="1">
    <source>
        <dbReference type="HAMAP-Rule" id="MF_00294"/>
    </source>
</evidence>
<evidence type="ECO:0000256" key="2">
    <source>
        <dbReference type="SAM" id="MobiDB-lite"/>
    </source>
</evidence>
<evidence type="ECO:0000305" key="3"/>
<feature type="chain" id="PRO_0000356582" description="Large ribosomal subunit protein bL33">
    <location>
        <begin position="1"/>
        <end position="51"/>
    </location>
</feature>
<feature type="region of interest" description="Disordered" evidence="2">
    <location>
        <begin position="1"/>
        <end position="21"/>
    </location>
</feature>
<comment type="similarity">
    <text evidence="1">Belongs to the bacterial ribosomal protein bL33 family.</text>
</comment>
<proteinExistence type="inferred from homology"/>
<organism>
    <name type="scientific">Neisseria gonorrhoeae (strain NCCP11945)</name>
    <dbReference type="NCBI Taxonomy" id="521006"/>
    <lineage>
        <taxon>Bacteria</taxon>
        <taxon>Pseudomonadati</taxon>
        <taxon>Pseudomonadota</taxon>
        <taxon>Betaproteobacteria</taxon>
        <taxon>Neisseriales</taxon>
        <taxon>Neisseriaceae</taxon>
        <taxon>Neisseria</taxon>
    </lineage>
</organism>